<accession>Q5N031</accession>
<reference key="1">
    <citation type="journal article" date="2007" name="Photosyn. Res.">
        <title>Complete nucleotide sequence of the freshwater unicellular cyanobacterium Synechococcus elongatus PCC 6301 chromosome: gene content and organization.</title>
        <authorList>
            <person name="Sugita C."/>
            <person name="Ogata K."/>
            <person name="Shikata M."/>
            <person name="Jikuya H."/>
            <person name="Takano J."/>
            <person name="Furumichi M."/>
            <person name="Kanehisa M."/>
            <person name="Omata T."/>
            <person name="Sugiura M."/>
            <person name="Sugita M."/>
        </authorList>
    </citation>
    <scope>NUCLEOTIDE SEQUENCE [LARGE SCALE GENOMIC DNA]</scope>
    <source>
        <strain>ATCC 27144 / PCC 6301 / SAUG 1402/1</strain>
    </source>
</reference>
<protein>
    <recommendedName>
        <fullName evidence="1">UvrABC system protein C</fullName>
        <shortName evidence="1">Protein UvrC</shortName>
    </recommendedName>
    <alternativeName>
        <fullName evidence="1">Excinuclease ABC subunit C</fullName>
    </alternativeName>
</protein>
<dbReference type="EMBL" id="AP008231">
    <property type="protein sequence ID" value="BAD80339.1"/>
    <property type="molecule type" value="Genomic_DNA"/>
</dbReference>
<dbReference type="RefSeq" id="WP_011244459.1">
    <property type="nucleotide sequence ID" value="NZ_CP085785.1"/>
</dbReference>
<dbReference type="SMR" id="Q5N031"/>
<dbReference type="GeneID" id="72430818"/>
<dbReference type="KEGG" id="syc:syc2149_d"/>
<dbReference type="eggNOG" id="COG0322">
    <property type="taxonomic scope" value="Bacteria"/>
</dbReference>
<dbReference type="Proteomes" id="UP000001175">
    <property type="component" value="Chromosome"/>
</dbReference>
<dbReference type="GO" id="GO:0005737">
    <property type="term" value="C:cytoplasm"/>
    <property type="evidence" value="ECO:0007669"/>
    <property type="project" value="UniProtKB-SubCell"/>
</dbReference>
<dbReference type="GO" id="GO:0009380">
    <property type="term" value="C:excinuclease repair complex"/>
    <property type="evidence" value="ECO:0007669"/>
    <property type="project" value="InterPro"/>
</dbReference>
<dbReference type="GO" id="GO:0003677">
    <property type="term" value="F:DNA binding"/>
    <property type="evidence" value="ECO:0007669"/>
    <property type="project" value="UniProtKB-UniRule"/>
</dbReference>
<dbReference type="GO" id="GO:0009381">
    <property type="term" value="F:excinuclease ABC activity"/>
    <property type="evidence" value="ECO:0007669"/>
    <property type="project" value="UniProtKB-UniRule"/>
</dbReference>
<dbReference type="GO" id="GO:0006289">
    <property type="term" value="P:nucleotide-excision repair"/>
    <property type="evidence" value="ECO:0007669"/>
    <property type="project" value="UniProtKB-UniRule"/>
</dbReference>
<dbReference type="GO" id="GO:0009432">
    <property type="term" value="P:SOS response"/>
    <property type="evidence" value="ECO:0007669"/>
    <property type="project" value="UniProtKB-UniRule"/>
</dbReference>
<dbReference type="CDD" id="cd10434">
    <property type="entry name" value="GIY-YIG_UvrC_Cho"/>
    <property type="match status" value="1"/>
</dbReference>
<dbReference type="FunFam" id="3.40.1440.10:FF:000001">
    <property type="entry name" value="UvrABC system protein C"/>
    <property type="match status" value="1"/>
</dbReference>
<dbReference type="Gene3D" id="1.10.150.20">
    <property type="entry name" value="5' to 3' exonuclease, C-terminal subdomain"/>
    <property type="match status" value="1"/>
</dbReference>
<dbReference type="Gene3D" id="3.40.1440.10">
    <property type="entry name" value="GIY-YIG endonuclease"/>
    <property type="match status" value="1"/>
</dbReference>
<dbReference type="Gene3D" id="4.10.860.10">
    <property type="entry name" value="UVR domain"/>
    <property type="match status" value="1"/>
</dbReference>
<dbReference type="Gene3D" id="3.30.420.340">
    <property type="entry name" value="UvrC, RNAse H endonuclease domain"/>
    <property type="match status" value="1"/>
</dbReference>
<dbReference type="HAMAP" id="MF_00203">
    <property type="entry name" value="UvrC"/>
    <property type="match status" value="1"/>
</dbReference>
<dbReference type="InterPro" id="IPR041663">
    <property type="entry name" value="DisA/LigA_HHH"/>
</dbReference>
<dbReference type="InterPro" id="IPR000305">
    <property type="entry name" value="GIY-YIG_endonuc"/>
</dbReference>
<dbReference type="InterPro" id="IPR035901">
    <property type="entry name" value="GIY-YIG_endonuc_sf"/>
</dbReference>
<dbReference type="InterPro" id="IPR047296">
    <property type="entry name" value="GIY-YIG_UvrC_Cho"/>
</dbReference>
<dbReference type="InterPro" id="IPR010994">
    <property type="entry name" value="RuvA_2-like"/>
</dbReference>
<dbReference type="InterPro" id="IPR001943">
    <property type="entry name" value="UVR_dom"/>
</dbReference>
<dbReference type="InterPro" id="IPR036876">
    <property type="entry name" value="UVR_dom_sf"/>
</dbReference>
<dbReference type="InterPro" id="IPR050066">
    <property type="entry name" value="UvrABC_protein_C"/>
</dbReference>
<dbReference type="InterPro" id="IPR004791">
    <property type="entry name" value="UvrC"/>
</dbReference>
<dbReference type="InterPro" id="IPR001162">
    <property type="entry name" value="UvrC_RNase_H_dom"/>
</dbReference>
<dbReference type="InterPro" id="IPR038476">
    <property type="entry name" value="UvrC_RNase_H_dom_sf"/>
</dbReference>
<dbReference type="NCBIfam" id="NF001824">
    <property type="entry name" value="PRK00558.1-5"/>
    <property type="match status" value="1"/>
</dbReference>
<dbReference type="NCBIfam" id="TIGR00194">
    <property type="entry name" value="uvrC"/>
    <property type="match status" value="1"/>
</dbReference>
<dbReference type="PANTHER" id="PTHR30562:SF1">
    <property type="entry name" value="UVRABC SYSTEM PROTEIN C"/>
    <property type="match status" value="1"/>
</dbReference>
<dbReference type="PANTHER" id="PTHR30562">
    <property type="entry name" value="UVRC/OXIDOREDUCTASE"/>
    <property type="match status" value="1"/>
</dbReference>
<dbReference type="Pfam" id="PF01541">
    <property type="entry name" value="GIY-YIG"/>
    <property type="match status" value="1"/>
</dbReference>
<dbReference type="Pfam" id="PF12826">
    <property type="entry name" value="HHH_2"/>
    <property type="match status" value="1"/>
</dbReference>
<dbReference type="Pfam" id="PF02151">
    <property type="entry name" value="UVR"/>
    <property type="match status" value="1"/>
</dbReference>
<dbReference type="Pfam" id="PF22920">
    <property type="entry name" value="UvrC_RNaseH"/>
    <property type="match status" value="1"/>
</dbReference>
<dbReference type="Pfam" id="PF08459">
    <property type="entry name" value="UvrC_RNaseH_dom"/>
    <property type="match status" value="1"/>
</dbReference>
<dbReference type="SMART" id="SM00465">
    <property type="entry name" value="GIYc"/>
    <property type="match status" value="1"/>
</dbReference>
<dbReference type="SUPFAM" id="SSF46600">
    <property type="entry name" value="C-terminal UvrC-binding domain of UvrB"/>
    <property type="match status" value="1"/>
</dbReference>
<dbReference type="SUPFAM" id="SSF82771">
    <property type="entry name" value="GIY-YIG endonuclease"/>
    <property type="match status" value="1"/>
</dbReference>
<dbReference type="SUPFAM" id="SSF47781">
    <property type="entry name" value="RuvA domain 2-like"/>
    <property type="match status" value="1"/>
</dbReference>
<dbReference type="PROSITE" id="PS50164">
    <property type="entry name" value="GIY_YIG"/>
    <property type="match status" value="1"/>
</dbReference>
<dbReference type="PROSITE" id="PS50151">
    <property type="entry name" value="UVR"/>
    <property type="match status" value="1"/>
</dbReference>
<dbReference type="PROSITE" id="PS50165">
    <property type="entry name" value="UVRC"/>
    <property type="match status" value="1"/>
</dbReference>
<gene>
    <name evidence="1" type="primary">uvrC</name>
    <name type="ordered locus">syc2149_d</name>
</gene>
<evidence type="ECO:0000255" key="1">
    <source>
        <dbReference type="HAMAP-Rule" id="MF_00203"/>
    </source>
</evidence>
<feature type="chain" id="PRO_0000227484" description="UvrABC system protein C">
    <location>
        <begin position="1"/>
        <end position="643"/>
    </location>
</feature>
<feature type="domain" description="GIY-YIG" evidence="1">
    <location>
        <begin position="25"/>
        <end position="104"/>
    </location>
</feature>
<feature type="domain" description="UVR" evidence="1">
    <location>
        <begin position="214"/>
        <end position="249"/>
    </location>
</feature>
<proteinExistence type="inferred from homology"/>
<sequence>MIAATPMPLLKQPDRLEARLRELPAEPGVYFMRDASDRILYIGKSKKLRSRVRSYFRDLERLNPRINLMVRQVCEIEIIVTDTEAEALALEANLIKQHQPHFNVLLKDDKKYPYLCITWSDDYPRIFITRKRRLGNSRDRYYGPYVDTRLLRHTLFLVKRLFPLRQRPQPLFKDRTCLNYDIGRCPGVCQSLIRPDDYRKTLQKVAMIFQGRSSELVELLEAQMLQAAENLEFEKAAKIRDQIRGLEGLGAEQKVQLPDDRISRDAIALAMDEQHACIQLFQIRAGKLVGRLGFVADAQSGSAAAIAQRVLEEHYASVDSVEIPQEVLVQHDLPEAELLEVWLSERRGRKVEILSPQRQIKADLIAMVERNAEYELARTQQSAERHTASLIDLADLLDLPELPRRIEGYDISHIQGSDAVASQVVFIDGLPAKQHYRRYKIRNPEVRAGHSDDFASLAEVLHRRFRKFAEAKARGESLAPSEQRQGSLLRPDDLADFPDLVMIDGGKGQLSAVVEVLRNLNLLEDVKLCSLAKKREEIFLPGASDPLPTDAEQPGVQLLRRLRDEAHRFAVSFHRQKRTERMRRSRLDDIPGLGHKRQKELLAHFRSIDYLRLATPEQIAEVPGIGAVLAQQIWGYFHPSETA</sequence>
<comment type="function">
    <text evidence="1">The UvrABC repair system catalyzes the recognition and processing of DNA lesions. UvrC both incises the 5' and 3' sides of the lesion. The N-terminal half is responsible for the 3' incision and the C-terminal half is responsible for the 5' incision.</text>
</comment>
<comment type="subunit">
    <text evidence="1">Interacts with UvrB in an incision complex.</text>
</comment>
<comment type="subcellular location">
    <subcellularLocation>
        <location evidence="1">Cytoplasm</location>
    </subcellularLocation>
</comment>
<comment type="similarity">
    <text evidence="1">Belongs to the UvrC family.</text>
</comment>
<organism>
    <name type="scientific">Synechococcus sp. (strain ATCC 27144 / PCC 6301 / SAUG 1402/1)</name>
    <name type="common">Anacystis nidulans</name>
    <dbReference type="NCBI Taxonomy" id="269084"/>
    <lineage>
        <taxon>Bacteria</taxon>
        <taxon>Bacillati</taxon>
        <taxon>Cyanobacteriota</taxon>
        <taxon>Cyanophyceae</taxon>
        <taxon>Synechococcales</taxon>
        <taxon>Synechococcaceae</taxon>
        <taxon>Synechococcus</taxon>
    </lineage>
</organism>
<keyword id="KW-0963">Cytoplasm</keyword>
<keyword id="KW-0227">DNA damage</keyword>
<keyword id="KW-0228">DNA excision</keyword>
<keyword id="KW-0234">DNA repair</keyword>
<keyword id="KW-0267">Excision nuclease</keyword>
<keyword id="KW-0742">SOS response</keyword>
<name>UVRC_SYNP6</name>